<reference key="1">
    <citation type="journal article" date="1997" name="Hum. Mol. Genet.">
        <title>UFD1L, a developmentally expressed ubiquitination gene, is deleted in CATCH 22 syndrome.</title>
        <authorList>
            <person name="Pizzuti A."/>
            <person name="Novelli G."/>
            <person name="Ratti A."/>
            <person name="Amati F."/>
            <person name="Mari A."/>
            <person name="Calabrese G."/>
            <person name="Nicolis S."/>
            <person name="Silani V."/>
            <person name="Marino B."/>
            <person name="Scarlato G."/>
            <person name="Ottolenghi S."/>
            <person name="Dallapiccola B."/>
        </authorList>
    </citation>
    <scope>NUCLEOTIDE SEQUENCE [MRNA] (ISOFORMS LONG AND SHORT)</scope>
    <scope>VARIANT ALA-130</scope>
    <source>
        <tissue>Brain</tissue>
    </source>
</reference>
<reference key="2">
    <citation type="submission" date="1999-04" db="EMBL/GenBank/DDBJ databases">
        <title>Characterization of human UFD1, a ubiquitin fusion-degradation protein.</title>
        <authorList>
            <person name="Gong L."/>
            <person name="Yeh E.T.H."/>
        </authorList>
    </citation>
    <scope>NUCLEOTIDE SEQUENCE [MRNA] (ISOFORM SHORT)</scope>
    <source>
        <tissue>Heart</tissue>
    </source>
</reference>
<reference key="3">
    <citation type="journal article" date="2004" name="Genome Biol.">
        <title>A genome annotation-driven approach to cloning the human ORFeome.</title>
        <authorList>
            <person name="Collins J.E."/>
            <person name="Wright C.L."/>
            <person name="Edwards C.A."/>
            <person name="Davis M.P."/>
            <person name="Grinham J.A."/>
            <person name="Cole C.G."/>
            <person name="Goward M.E."/>
            <person name="Aguado B."/>
            <person name="Mallya M."/>
            <person name="Mokrab Y."/>
            <person name="Huckle E.J."/>
            <person name="Beare D.M."/>
            <person name="Dunham I."/>
        </authorList>
    </citation>
    <scope>NUCLEOTIDE SEQUENCE [LARGE SCALE MRNA] (ISOFORM SHORT)</scope>
</reference>
<reference key="4">
    <citation type="submission" date="2006-07" db="EMBL/GenBank/DDBJ databases">
        <authorList>
            <person name="Totoki Y."/>
            <person name="Toyoda A."/>
            <person name="Takeda T."/>
            <person name="Sakaki Y."/>
            <person name="Tanaka A."/>
            <person name="Yokoyama S."/>
        </authorList>
    </citation>
    <scope>NUCLEOTIDE SEQUENCE [LARGE SCALE MRNA] (ISOFORM 3)</scope>
    <source>
        <tissue>Brain</tissue>
    </source>
</reference>
<reference key="5">
    <citation type="journal article" date="1999" name="Nature">
        <title>The DNA sequence of human chromosome 22.</title>
        <authorList>
            <person name="Dunham I."/>
            <person name="Hunt A.R."/>
            <person name="Collins J.E."/>
            <person name="Bruskiewich R."/>
            <person name="Beare D.M."/>
            <person name="Clamp M."/>
            <person name="Smink L.J."/>
            <person name="Ainscough R."/>
            <person name="Almeida J.P."/>
            <person name="Babbage A.K."/>
            <person name="Bagguley C."/>
            <person name="Bailey J."/>
            <person name="Barlow K.F."/>
            <person name="Bates K.N."/>
            <person name="Beasley O.P."/>
            <person name="Bird C.P."/>
            <person name="Blakey S.E."/>
            <person name="Bridgeman A.M."/>
            <person name="Buck D."/>
            <person name="Burgess J."/>
            <person name="Burrill W.D."/>
            <person name="Burton J."/>
            <person name="Carder C."/>
            <person name="Carter N.P."/>
            <person name="Chen Y."/>
            <person name="Clark G."/>
            <person name="Clegg S.M."/>
            <person name="Cobley V.E."/>
            <person name="Cole C.G."/>
            <person name="Collier R.E."/>
            <person name="Connor R."/>
            <person name="Conroy D."/>
            <person name="Corby N.R."/>
            <person name="Coville G.J."/>
            <person name="Cox A.V."/>
            <person name="Davis J."/>
            <person name="Dawson E."/>
            <person name="Dhami P.D."/>
            <person name="Dockree C."/>
            <person name="Dodsworth S.J."/>
            <person name="Durbin R.M."/>
            <person name="Ellington A.G."/>
            <person name="Evans K.L."/>
            <person name="Fey J.M."/>
            <person name="Fleming K."/>
            <person name="French L."/>
            <person name="Garner A.A."/>
            <person name="Gilbert J.G.R."/>
            <person name="Goward M.E."/>
            <person name="Grafham D.V."/>
            <person name="Griffiths M.N.D."/>
            <person name="Hall C."/>
            <person name="Hall R.E."/>
            <person name="Hall-Tamlyn G."/>
            <person name="Heathcott R.W."/>
            <person name="Ho S."/>
            <person name="Holmes S."/>
            <person name="Hunt S.E."/>
            <person name="Jones M.C."/>
            <person name="Kershaw J."/>
            <person name="Kimberley A.M."/>
            <person name="King A."/>
            <person name="Laird G.K."/>
            <person name="Langford C.F."/>
            <person name="Leversha M.A."/>
            <person name="Lloyd C."/>
            <person name="Lloyd D.M."/>
            <person name="Martyn I.D."/>
            <person name="Mashreghi-Mohammadi M."/>
            <person name="Matthews L.H."/>
            <person name="Mccann O.T."/>
            <person name="Mcclay J."/>
            <person name="Mclaren S."/>
            <person name="McMurray A.A."/>
            <person name="Milne S.A."/>
            <person name="Mortimore B.J."/>
            <person name="Odell C.N."/>
            <person name="Pavitt R."/>
            <person name="Pearce A.V."/>
            <person name="Pearson D."/>
            <person name="Phillimore B.J.C.T."/>
            <person name="Phillips S.H."/>
            <person name="Plumb R.W."/>
            <person name="Ramsay H."/>
            <person name="Ramsey Y."/>
            <person name="Rogers L."/>
            <person name="Ross M.T."/>
            <person name="Scott C.E."/>
            <person name="Sehra H.K."/>
            <person name="Skuce C.D."/>
            <person name="Smalley S."/>
            <person name="Smith M.L."/>
            <person name="Soderlund C."/>
            <person name="Spragon L."/>
            <person name="Steward C.A."/>
            <person name="Sulston J.E."/>
            <person name="Swann R.M."/>
            <person name="Vaudin M."/>
            <person name="Wall M."/>
            <person name="Wallis J.M."/>
            <person name="Whiteley M.N."/>
            <person name="Willey D.L."/>
            <person name="Williams L."/>
            <person name="Williams S.A."/>
            <person name="Williamson H."/>
            <person name="Wilmer T.E."/>
            <person name="Wilming L."/>
            <person name="Wright C.L."/>
            <person name="Hubbard T."/>
            <person name="Bentley D.R."/>
            <person name="Beck S."/>
            <person name="Rogers J."/>
            <person name="Shimizu N."/>
            <person name="Minoshima S."/>
            <person name="Kawasaki K."/>
            <person name="Sasaki T."/>
            <person name="Asakawa S."/>
            <person name="Kudoh J."/>
            <person name="Shintani A."/>
            <person name="Shibuya K."/>
            <person name="Yoshizaki Y."/>
            <person name="Aoki N."/>
            <person name="Mitsuyama S."/>
            <person name="Roe B.A."/>
            <person name="Chen F."/>
            <person name="Chu L."/>
            <person name="Crabtree J."/>
            <person name="Deschamps S."/>
            <person name="Do A."/>
            <person name="Do T."/>
            <person name="Dorman A."/>
            <person name="Fang F."/>
            <person name="Fu Y."/>
            <person name="Hu P."/>
            <person name="Hua A."/>
            <person name="Kenton S."/>
            <person name="Lai H."/>
            <person name="Lao H.I."/>
            <person name="Lewis J."/>
            <person name="Lewis S."/>
            <person name="Lin S.-P."/>
            <person name="Loh P."/>
            <person name="Malaj E."/>
            <person name="Nguyen T."/>
            <person name="Pan H."/>
            <person name="Phan S."/>
            <person name="Qi S."/>
            <person name="Qian Y."/>
            <person name="Ray L."/>
            <person name="Ren Q."/>
            <person name="Shaull S."/>
            <person name="Sloan D."/>
            <person name="Song L."/>
            <person name="Wang Q."/>
            <person name="Wang Y."/>
            <person name="Wang Z."/>
            <person name="White J."/>
            <person name="Willingham D."/>
            <person name="Wu H."/>
            <person name="Yao Z."/>
            <person name="Zhan M."/>
            <person name="Zhang G."/>
            <person name="Chissoe S."/>
            <person name="Murray J."/>
            <person name="Miller N."/>
            <person name="Minx P."/>
            <person name="Fulton R."/>
            <person name="Johnson D."/>
            <person name="Bemis G."/>
            <person name="Bentley D."/>
            <person name="Bradshaw H."/>
            <person name="Bourne S."/>
            <person name="Cordes M."/>
            <person name="Du Z."/>
            <person name="Fulton L."/>
            <person name="Goela D."/>
            <person name="Graves T."/>
            <person name="Hawkins J."/>
            <person name="Hinds K."/>
            <person name="Kemp K."/>
            <person name="Latreille P."/>
            <person name="Layman D."/>
            <person name="Ozersky P."/>
            <person name="Rohlfing T."/>
            <person name="Scheet P."/>
            <person name="Walker C."/>
            <person name="Wamsley A."/>
            <person name="Wohldmann P."/>
            <person name="Pepin K."/>
            <person name="Nelson J."/>
            <person name="Korf I."/>
            <person name="Bedell J.A."/>
            <person name="Hillier L.W."/>
            <person name="Mardis E."/>
            <person name="Waterston R."/>
            <person name="Wilson R."/>
            <person name="Emanuel B.S."/>
            <person name="Shaikh T."/>
            <person name="Kurahashi H."/>
            <person name="Saitta S."/>
            <person name="Budarf M.L."/>
            <person name="McDermid H.E."/>
            <person name="Johnson A."/>
            <person name="Wong A.C.C."/>
            <person name="Morrow B.E."/>
            <person name="Edelmann L."/>
            <person name="Kim U.J."/>
            <person name="Shizuya H."/>
            <person name="Simon M.I."/>
            <person name="Dumanski J.P."/>
            <person name="Peyrard M."/>
            <person name="Kedra D."/>
            <person name="Seroussi E."/>
            <person name="Fransson I."/>
            <person name="Tapia I."/>
            <person name="Bruder C.E."/>
            <person name="O'Brien K.P."/>
            <person name="Wilkinson P."/>
            <person name="Bodenteich A."/>
            <person name="Hartman K."/>
            <person name="Hu X."/>
            <person name="Khan A.S."/>
            <person name="Lane L."/>
            <person name="Tilahun Y."/>
            <person name="Wright H."/>
        </authorList>
    </citation>
    <scope>NUCLEOTIDE SEQUENCE [LARGE SCALE GENOMIC DNA]</scope>
</reference>
<reference key="6">
    <citation type="journal article" date="2004" name="Genome Res.">
        <title>The status, quality, and expansion of the NIH full-length cDNA project: the Mammalian Gene Collection (MGC).</title>
        <authorList>
            <consortium name="The MGC Project Team"/>
        </authorList>
    </citation>
    <scope>NUCLEOTIDE SEQUENCE [LARGE SCALE MRNA] (ISOFORM SHORT)</scope>
    <source>
        <tissue>Brain</tissue>
        <tissue>Skin</tissue>
    </source>
</reference>
<reference key="7">
    <citation type="journal article" date="2001" name="Gene">
        <title>Cloning and characterization of the gene encoding human NPL4, a protein interacting with the ubiquitin fusion-degradation protein (UFD1L).</title>
        <authorList>
            <person name="Botta A."/>
            <person name="Tandoi C."/>
            <person name="Fini G."/>
            <person name="Calabrese G."/>
            <person name="Dallapiccola B."/>
            <person name="Novelli G."/>
        </authorList>
    </citation>
    <scope>INTERACTION WITH NPLOC4</scope>
</reference>
<reference key="8">
    <citation type="journal article" date="2008" name="Proc. Natl. Acad. Sci. U.S.A.">
        <title>A quantitative atlas of mitotic phosphorylation.</title>
        <authorList>
            <person name="Dephoure N."/>
            <person name="Zhou C."/>
            <person name="Villen J."/>
            <person name="Beausoleil S.A."/>
            <person name="Bakalarski C.E."/>
            <person name="Elledge S.J."/>
            <person name="Gygi S.P."/>
        </authorList>
    </citation>
    <scope>PHOSPHORYLATION [LARGE SCALE ANALYSIS] AT SER-299</scope>
    <scope>IDENTIFICATION BY MASS SPECTROMETRY [LARGE SCALE ANALYSIS]</scope>
    <source>
        <tissue>Cervix carcinoma</tissue>
    </source>
</reference>
<reference key="9">
    <citation type="journal article" date="2009" name="Anal. Chem.">
        <title>Lys-N and trypsin cover complementary parts of the phosphoproteome in a refined SCX-based approach.</title>
        <authorList>
            <person name="Gauci S."/>
            <person name="Helbig A.O."/>
            <person name="Slijper M."/>
            <person name="Krijgsveld J."/>
            <person name="Heck A.J."/>
            <person name="Mohammed S."/>
        </authorList>
    </citation>
    <scope>ACETYLATION [LARGE SCALE ANALYSIS] AT MET-1</scope>
    <scope>IDENTIFICATION BY MASS SPECTROMETRY [LARGE SCALE ANALYSIS]</scope>
</reference>
<reference key="10">
    <citation type="journal article" date="2009" name="Sci. Signal.">
        <title>Quantitative phosphoproteomic analysis of T cell receptor signaling reveals system-wide modulation of protein-protein interactions.</title>
        <authorList>
            <person name="Mayya V."/>
            <person name="Lundgren D.H."/>
            <person name="Hwang S.-I."/>
            <person name="Rezaul K."/>
            <person name="Wu L."/>
            <person name="Eng J.K."/>
            <person name="Rodionov V."/>
            <person name="Han D.K."/>
        </authorList>
    </citation>
    <scope>PHOSPHORYLATION [LARGE SCALE ANALYSIS] AT SER-299</scope>
    <scope>IDENTIFICATION BY MASS SPECTROMETRY [LARGE SCALE ANALYSIS]</scope>
    <source>
        <tissue>Leukemic T-cell</tissue>
    </source>
</reference>
<reference key="11">
    <citation type="journal article" date="2010" name="Sci. Signal.">
        <title>Quantitative phosphoproteomics reveals widespread full phosphorylation site occupancy during mitosis.</title>
        <authorList>
            <person name="Olsen J.V."/>
            <person name="Vermeulen M."/>
            <person name="Santamaria A."/>
            <person name="Kumar C."/>
            <person name="Miller M.L."/>
            <person name="Jensen L.J."/>
            <person name="Gnad F."/>
            <person name="Cox J."/>
            <person name="Jensen T.S."/>
            <person name="Nigg E.A."/>
            <person name="Brunak S."/>
            <person name="Mann M."/>
        </authorList>
    </citation>
    <scope>PHOSPHORYLATION [LARGE SCALE ANALYSIS] AT SER-231; SER-245; SER-247 AND SER-299</scope>
    <scope>IDENTIFICATION BY MASS SPECTROMETRY [LARGE SCALE ANALYSIS]</scope>
    <source>
        <tissue>Cervix carcinoma</tissue>
    </source>
</reference>
<reference key="12">
    <citation type="journal article" date="2011" name="BMC Syst. Biol.">
        <title>Initial characterization of the human central proteome.</title>
        <authorList>
            <person name="Burkard T.R."/>
            <person name="Planyavsky M."/>
            <person name="Kaupe I."/>
            <person name="Breitwieser F.P."/>
            <person name="Buerckstuemmer T."/>
            <person name="Bennett K.L."/>
            <person name="Superti-Furga G."/>
            <person name="Colinge J."/>
        </authorList>
    </citation>
    <scope>IDENTIFICATION BY MASS SPECTROMETRY [LARGE SCALE ANALYSIS]</scope>
</reference>
<reference key="13">
    <citation type="journal article" date="2011" name="Proc. Natl. Acad. Sci. U.S.A.">
        <title>Ubiquitin-recognition protein Ufd1 couples the endoplasmic reticulum (ER) stress response to cell cycle control.</title>
        <authorList>
            <person name="Chen M."/>
            <person name="Gutierrez G.J."/>
            <person name="Ronai Z.A."/>
        </authorList>
    </citation>
    <scope>INTERACTION WITH USP13</scope>
</reference>
<reference key="14">
    <citation type="journal article" date="2011" name="Sci. Signal.">
        <title>System-wide temporal characterization of the proteome and phosphoproteome of human embryonic stem cell differentiation.</title>
        <authorList>
            <person name="Rigbolt K.T."/>
            <person name="Prokhorova T.A."/>
            <person name="Akimov V."/>
            <person name="Henningsen J."/>
            <person name="Johansen P.T."/>
            <person name="Kratchmarova I."/>
            <person name="Kassem M."/>
            <person name="Mann M."/>
            <person name="Olsen J.V."/>
            <person name="Blagoev B."/>
        </authorList>
    </citation>
    <scope>PHOSPHORYLATION [LARGE SCALE ANALYSIS] AT SER-299</scope>
    <scope>IDENTIFICATION BY MASS SPECTROMETRY [LARGE SCALE ANALYSIS]</scope>
</reference>
<reference key="15">
    <citation type="journal article" date="2013" name="J. Proteome Res.">
        <title>Toward a comprehensive characterization of a human cancer cell phosphoproteome.</title>
        <authorList>
            <person name="Zhou H."/>
            <person name="Di Palma S."/>
            <person name="Preisinger C."/>
            <person name="Peng M."/>
            <person name="Polat A.N."/>
            <person name="Heck A.J."/>
            <person name="Mohammed S."/>
        </authorList>
    </citation>
    <scope>PHOSPHORYLATION [LARGE SCALE ANALYSIS] AT SER-129; SER-231; SER-245; SER-247 AND SER-299</scope>
    <scope>IDENTIFICATION BY MASS SPECTROMETRY [LARGE SCALE ANALYSIS]</scope>
    <source>
        <tissue>Cervix carcinoma</tissue>
        <tissue>Erythroleukemia</tissue>
    </source>
</reference>
<reference key="16">
    <citation type="journal article" date="2014" name="Biochem. J.">
        <title>Signal-peptide-mediated translocation is regulated by a p97-AIRAPL complex.</title>
        <authorList>
            <person name="Glinka T."/>
            <person name="Alter J."/>
            <person name="Braunstein I."/>
            <person name="Tzach L."/>
            <person name="Wei Sheng C."/>
            <person name="Geifman S."/>
            <person name="Edelmann M.J."/>
            <person name="Kessler B.M."/>
            <person name="Stanhill A."/>
        </authorList>
    </citation>
    <scope>INTERACTION WITH ZFAND2B</scope>
</reference>
<reference key="17">
    <citation type="journal article" date="2015" name="EMBO J.">
        <title>A non-canonical role of the p97 complex in RIG-I antiviral signaling.</title>
        <authorList>
            <person name="Hao Q."/>
            <person name="Jiao S."/>
            <person name="Shi Z."/>
            <person name="Li C."/>
            <person name="Meng X."/>
            <person name="Zhang Z."/>
            <person name="Wang Y."/>
            <person name="Song X."/>
            <person name="Wang W."/>
            <person name="Zhang R."/>
            <person name="Zhao Y."/>
            <person name="Wong C.C."/>
            <person name="Zhou Z."/>
        </authorList>
    </citation>
    <scope>FUNCTION</scope>
    <scope>INTERACTION WITH NPLOC4 AND VCP</scope>
</reference>
<reference key="18">
    <citation type="submission" date="2008-04" db="PDB data bank">
        <title>Solution structure of human ubiquitin fusion degradation protein 1 homolog UFD1.</title>
        <authorList>
            <consortium name="RIKEN structural genomics initiative (RSGI)"/>
        </authorList>
    </citation>
    <scope>STRUCTURE BY NMR OF 11-193</scope>
</reference>
<accession>Q92890</accession>
<accession>A8MW31</accession>
<accession>Q9Y5N0</accession>
<dbReference type="EMBL" id="U64444">
    <property type="protein sequence ID" value="AAD08720.1"/>
    <property type="molecule type" value="mRNA"/>
</dbReference>
<dbReference type="EMBL" id="AF141201">
    <property type="protein sequence ID" value="AAD28788.1"/>
    <property type="molecule type" value="mRNA"/>
</dbReference>
<dbReference type="EMBL" id="CR456607">
    <property type="protein sequence ID" value="CAG30493.1"/>
    <property type="molecule type" value="mRNA"/>
</dbReference>
<dbReference type="EMBL" id="AK225877">
    <property type="status" value="NOT_ANNOTATED_CDS"/>
    <property type="molecule type" value="mRNA"/>
</dbReference>
<dbReference type="EMBL" id="AC000068">
    <property type="status" value="NOT_ANNOTATED_CDS"/>
    <property type="molecule type" value="Genomic_DNA"/>
</dbReference>
<dbReference type="EMBL" id="AC000087">
    <property type="status" value="NOT_ANNOTATED_CDS"/>
    <property type="molecule type" value="Genomic_DNA"/>
</dbReference>
<dbReference type="EMBL" id="BC001049">
    <property type="protein sequence ID" value="AAH01049.1"/>
    <property type="molecule type" value="mRNA"/>
</dbReference>
<dbReference type="EMBL" id="BC005087">
    <property type="protein sequence ID" value="AAH05087.1"/>
    <property type="molecule type" value="mRNA"/>
</dbReference>
<dbReference type="CCDS" id="CCDS13761.1">
    <molecule id="Q92890-2"/>
</dbReference>
<dbReference type="CCDS" id="CCDS33600.2">
    <molecule id="Q92890-3"/>
</dbReference>
<dbReference type="RefSeq" id="NP_001030324.2">
    <molecule id="Q92890-3"/>
    <property type="nucleotide sequence ID" value="NM_001035247.3"/>
</dbReference>
<dbReference type="RefSeq" id="NP_005650.2">
    <molecule id="Q92890-2"/>
    <property type="nucleotide sequence ID" value="NM_005659.6"/>
</dbReference>
<dbReference type="PDB" id="2YUJ">
    <property type="method" value="NMR"/>
    <property type="chains" value="A=11-193"/>
</dbReference>
<dbReference type="PDB" id="5B6C">
    <property type="method" value="X-ray"/>
    <property type="resolution" value="1.55 A"/>
    <property type="chains" value="B=225-235"/>
</dbReference>
<dbReference type="PDB" id="5C1B">
    <property type="method" value="X-ray"/>
    <property type="resolution" value="3.08 A"/>
    <property type="chains" value="U/V=221-241"/>
</dbReference>
<dbReference type="PDB" id="7WWQ">
    <property type="method" value="X-ray"/>
    <property type="resolution" value="2.72 A"/>
    <property type="chains" value="B=258-273"/>
</dbReference>
<dbReference type="PDBsum" id="2YUJ"/>
<dbReference type="PDBsum" id="5B6C"/>
<dbReference type="PDBsum" id="5C1B"/>
<dbReference type="PDBsum" id="7WWQ"/>
<dbReference type="SMR" id="Q92890"/>
<dbReference type="BioGRID" id="113200">
    <property type="interactions" value="165"/>
</dbReference>
<dbReference type="ComplexPortal" id="CPX-137">
    <property type="entry name" value="VCP-NPL4-UFD1 AAA ATPase complex"/>
</dbReference>
<dbReference type="ComplexPortal" id="CPX-8096">
    <property type="entry name" value="VCP-NPL4-UFD1-FAF1 AAA ATPase complex"/>
</dbReference>
<dbReference type="ComplexPortal" id="CPX-8101">
    <property type="entry name" value="VCP-NPL4-UFD1-UBXN7 AAA ATPase complex"/>
</dbReference>
<dbReference type="ComplexPortal" id="CPX-8104">
    <property type="entry name" value="VCP-NPL4-UFD1-FAF2 AAA ATPase complex"/>
</dbReference>
<dbReference type="ComplexPortal" id="CPX-8105">
    <property type="entry name" value="VCP-NPL4-UFD1-UBXN1 AAA ATPase complex"/>
</dbReference>
<dbReference type="CORUM" id="Q92890"/>
<dbReference type="DIP" id="DIP-45954N"/>
<dbReference type="FunCoup" id="Q92890">
    <property type="interactions" value="4246"/>
</dbReference>
<dbReference type="IntAct" id="Q92890">
    <property type="interactions" value="60"/>
</dbReference>
<dbReference type="MINT" id="Q92890"/>
<dbReference type="STRING" id="9606.ENSP00000263202"/>
<dbReference type="MoonDB" id="Q92890">
    <property type="type" value="Predicted"/>
</dbReference>
<dbReference type="GlyGen" id="Q92890">
    <property type="glycosylation" value="2 sites, 1 N-linked glycan (1 site), 1 O-linked glycan (1 site)"/>
</dbReference>
<dbReference type="iPTMnet" id="Q92890"/>
<dbReference type="PhosphoSitePlus" id="Q92890"/>
<dbReference type="BioMuta" id="UFD1"/>
<dbReference type="DMDM" id="160332310"/>
<dbReference type="OGP" id="Q92890"/>
<dbReference type="jPOST" id="Q92890"/>
<dbReference type="MassIVE" id="Q92890"/>
<dbReference type="PaxDb" id="9606-ENSP00000263202"/>
<dbReference type="PeptideAtlas" id="Q92890"/>
<dbReference type="ProteomicsDB" id="2220"/>
<dbReference type="ProteomicsDB" id="75576">
    <molecule id="Q92890-2"/>
</dbReference>
<dbReference type="ProteomicsDB" id="75577">
    <molecule id="Q92890-1"/>
</dbReference>
<dbReference type="Pumba" id="Q92890"/>
<dbReference type="Antibodypedia" id="22930">
    <property type="antibodies" value="391 antibodies from 32 providers"/>
</dbReference>
<dbReference type="DNASU" id="7353"/>
<dbReference type="Ensembl" id="ENST00000263202.15">
    <molecule id="Q92890-2"/>
    <property type="protein sequence ID" value="ENSP00000263202.9"/>
    <property type="gene ID" value="ENSG00000070010.19"/>
</dbReference>
<dbReference type="Ensembl" id="ENST00000399523.5">
    <molecule id="Q92890-3"/>
    <property type="protein sequence ID" value="ENSP00000382439.1"/>
    <property type="gene ID" value="ENSG00000070010.19"/>
</dbReference>
<dbReference type="GeneID" id="7353"/>
<dbReference type="KEGG" id="hsa:7353"/>
<dbReference type="MANE-Select" id="ENST00000263202.15">
    <property type="protein sequence ID" value="ENSP00000263202.9"/>
    <property type="RefSeq nucleotide sequence ID" value="NM_005659.7"/>
    <property type="RefSeq protein sequence ID" value="NP_005650.2"/>
</dbReference>
<dbReference type="UCSC" id="uc002zpm.3">
    <molecule id="Q92890-2"/>
    <property type="organism name" value="human"/>
</dbReference>
<dbReference type="AGR" id="HGNC:12520"/>
<dbReference type="CTD" id="7353"/>
<dbReference type="DisGeNET" id="7353"/>
<dbReference type="GeneCards" id="UFD1"/>
<dbReference type="HGNC" id="HGNC:12520">
    <property type="gene designation" value="UFD1"/>
</dbReference>
<dbReference type="HPA" id="ENSG00000070010">
    <property type="expression patterns" value="Low tissue specificity"/>
</dbReference>
<dbReference type="MalaCards" id="UFD1"/>
<dbReference type="MIM" id="601754">
    <property type="type" value="gene"/>
</dbReference>
<dbReference type="neXtProt" id="NX_Q92890"/>
<dbReference type="OpenTargets" id="ENSG00000070010"/>
<dbReference type="Orphanet" id="567">
    <property type="disease" value="22q11.2 deletion syndrome"/>
</dbReference>
<dbReference type="PharmGKB" id="PA37167"/>
<dbReference type="VEuPathDB" id="HostDB:ENSG00000070010"/>
<dbReference type="eggNOG" id="KOG1816">
    <property type="taxonomic scope" value="Eukaryota"/>
</dbReference>
<dbReference type="GeneTree" id="ENSGT00390000002408"/>
<dbReference type="HOGENOM" id="CLU_037790_2_0_1"/>
<dbReference type="InParanoid" id="Q92890"/>
<dbReference type="OMA" id="WMMQQLC"/>
<dbReference type="OrthoDB" id="422728at2759"/>
<dbReference type="PAN-GO" id="Q92890">
    <property type="GO annotations" value="4 GO annotations based on evolutionary models"/>
</dbReference>
<dbReference type="PhylomeDB" id="Q92890"/>
<dbReference type="TreeFam" id="TF314581"/>
<dbReference type="PathwayCommons" id="Q92890"/>
<dbReference type="Reactome" id="R-HSA-110320">
    <property type="pathway name" value="Translesion Synthesis by POLH"/>
</dbReference>
<dbReference type="Reactome" id="R-HSA-5689880">
    <property type="pathway name" value="Ub-specific processing proteases"/>
</dbReference>
<dbReference type="Reactome" id="R-HSA-8951664">
    <property type="pathway name" value="Neddylation"/>
</dbReference>
<dbReference type="Reactome" id="R-HSA-9755511">
    <property type="pathway name" value="KEAP1-NFE2L2 pathway"/>
</dbReference>
<dbReference type="SignaLink" id="Q92890"/>
<dbReference type="SIGNOR" id="Q92890"/>
<dbReference type="UniPathway" id="UPA00144"/>
<dbReference type="BioGRID-ORCS" id="7353">
    <property type="hits" value="797 hits in 1175 CRISPR screens"/>
</dbReference>
<dbReference type="ChiTaRS" id="UFD1L">
    <property type="organism name" value="human"/>
</dbReference>
<dbReference type="EvolutionaryTrace" id="Q92890"/>
<dbReference type="GeneWiki" id="UFD1L"/>
<dbReference type="GenomeRNAi" id="7353"/>
<dbReference type="Pharos" id="Q92890">
    <property type="development level" value="Tbio"/>
</dbReference>
<dbReference type="PRO" id="PR:Q92890"/>
<dbReference type="Proteomes" id="UP000005640">
    <property type="component" value="Chromosome 22"/>
</dbReference>
<dbReference type="RNAct" id="Q92890">
    <property type="molecule type" value="protein"/>
</dbReference>
<dbReference type="Bgee" id="ENSG00000070010">
    <property type="expression patterns" value="Expressed in tendon of biceps brachii and 213 other cell types or tissues"/>
</dbReference>
<dbReference type="ExpressionAtlas" id="Q92890">
    <property type="expression patterns" value="baseline and differential"/>
</dbReference>
<dbReference type="GO" id="GO:0005829">
    <property type="term" value="C:cytosol"/>
    <property type="evidence" value="ECO:0000304"/>
    <property type="project" value="Reactome"/>
</dbReference>
<dbReference type="GO" id="GO:0005654">
    <property type="term" value="C:nucleoplasm"/>
    <property type="evidence" value="ECO:0000304"/>
    <property type="project" value="Reactome"/>
</dbReference>
<dbReference type="GO" id="GO:0005634">
    <property type="term" value="C:nucleus"/>
    <property type="evidence" value="ECO:0007005"/>
    <property type="project" value="UniProtKB"/>
</dbReference>
<dbReference type="GO" id="GO:0036501">
    <property type="term" value="C:UFD1-NPL4 complex"/>
    <property type="evidence" value="ECO:0000353"/>
    <property type="project" value="ParkinsonsUK-UCL"/>
</dbReference>
<dbReference type="GO" id="GO:0034098">
    <property type="term" value="C:VCP-NPL4-UFD1 AAA ATPase complex"/>
    <property type="evidence" value="ECO:0000314"/>
    <property type="project" value="UniProtKB"/>
</dbReference>
<dbReference type="GO" id="GO:0004843">
    <property type="term" value="F:cysteine-type deubiquitinase activity"/>
    <property type="evidence" value="ECO:0000304"/>
    <property type="project" value="ProtInc"/>
</dbReference>
<dbReference type="GO" id="GO:0036435">
    <property type="term" value="F:K48-linked polyubiquitin modification-dependent protein binding"/>
    <property type="evidence" value="ECO:0007669"/>
    <property type="project" value="Ensembl"/>
</dbReference>
<dbReference type="GO" id="GO:0031593">
    <property type="term" value="F:polyubiquitin modification-dependent protein binding"/>
    <property type="evidence" value="ECO:0000318"/>
    <property type="project" value="GO_Central"/>
</dbReference>
<dbReference type="GO" id="GO:0071218">
    <property type="term" value="P:cellular response to misfolded protein"/>
    <property type="evidence" value="ECO:0000315"/>
    <property type="project" value="ParkinsonsUK-UCL"/>
</dbReference>
<dbReference type="GO" id="GO:0036503">
    <property type="term" value="P:ERAD pathway"/>
    <property type="evidence" value="ECO:0000315"/>
    <property type="project" value="ParkinsonsUK-UCL"/>
</dbReference>
<dbReference type="GO" id="GO:0039536">
    <property type="term" value="P:negative regulation of RIG-I signaling pathway"/>
    <property type="evidence" value="ECO:0000315"/>
    <property type="project" value="UniProtKB"/>
</dbReference>
<dbReference type="GO" id="GO:0032480">
    <property type="term" value="P:negative regulation of type I interferon production"/>
    <property type="evidence" value="ECO:0000315"/>
    <property type="project" value="UniProtKB"/>
</dbReference>
<dbReference type="GO" id="GO:0043161">
    <property type="term" value="P:proteasome-mediated ubiquitin-dependent protein catabolic process"/>
    <property type="evidence" value="ECO:0007669"/>
    <property type="project" value="UniProtKB-UniPathway"/>
</dbReference>
<dbReference type="GO" id="GO:0030970">
    <property type="term" value="P:retrograde protein transport, ER to cytosol"/>
    <property type="evidence" value="ECO:0000315"/>
    <property type="project" value="ParkinsonsUK-UCL"/>
</dbReference>
<dbReference type="GO" id="GO:0001501">
    <property type="term" value="P:skeletal system development"/>
    <property type="evidence" value="ECO:0000304"/>
    <property type="project" value="ProtInc"/>
</dbReference>
<dbReference type="GO" id="GO:0006511">
    <property type="term" value="P:ubiquitin-dependent protein catabolic process"/>
    <property type="evidence" value="ECO:0000315"/>
    <property type="project" value="UniProtKB"/>
</dbReference>
<dbReference type="FunFam" id="2.40.40.50:FF:000001">
    <property type="entry name" value="Ubiquitin fusion degradation protein 1 homolog"/>
    <property type="match status" value="1"/>
</dbReference>
<dbReference type="FunFam" id="3.10.330.10:FF:000002">
    <property type="entry name" value="ubiquitin fusion degradation protein 1 homolog"/>
    <property type="match status" value="1"/>
</dbReference>
<dbReference type="Gene3D" id="3.10.330.10">
    <property type="match status" value="1"/>
</dbReference>
<dbReference type="Gene3D" id="2.40.40.50">
    <property type="entry name" value="Ubiquitin fusion degradation protein UFD1, N-terminal domain"/>
    <property type="match status" value="1"/>
</dbReference>
<dbReference type="InterPro" id="IPR004854">
    <property type="entry name" value="Ufd1-like"/>
</dbReference>
<dbReference type="InterPro" id="IPR042299">
    <property type="entry name" value="Ufd1-like_Nn"/>
</dbReference>
<dbReference type="InterPro" id="IPR055417">
    <property type="entry name" value="UFD1_N1"/>
</dbReference>
<dbReference type="InterPro" id="IPR055418">
    <property type="entry name" value="UFD1_N2"/>
</dbReference>
<dbReference type="PANTHER" id="PTHR12555">
    <property type="entry name" value="UBIQUITIN FUSION DEGRADATON PROTEIN 1"/>
    <property type="match status" value="1"/>
</dbReference>
<dbReference type="PANTHER" id="PTHR12555:SF13">
    <property type="entry name" value="UBIQUITIN RECOGNITION FACTOR IN ER-ASSOCIATED DEGRADATION PROTEIN 1"/>
    <property type="match status" value="1"/>
</dbReference>
<dbReference type="Pfam" id="PF03152">
    <property type="entry name" value="UFD1_N1"/>
    <property type="match status" value="1"/>
</dbReference>
<dbReference type="Pfam" id="PF24842">
    <property type="entry name" value="UFD1_N2"/>
    <property type="match status" value="1"/>
</dbReference>
<feature type="chain" id="PRO_0000194984" description="Ubiquitin recognition factor in ER-associated degradation protein 1">
    <location>
        <begin position="1"/>
        <end position="307"/>
    </location>
</feature>
<feature type="region of interest" description="Disordered" evidence="2">
    <location>
        <begin position="231"/>
        <end position="256"/>
    </location>
</feature>
<feature type="region of interest" description="Disordered" evidence="2">
    <location>
        <begin position="288"/>
        <end position="307"/>
    </location>
</feature>
<feature type="modified residue" description="N-acetylmethionine" evidence="13">
    <location>
        <position position="1"/>
    </location>
</feature>
<feature type="modified residue" description="Phosphoserine" evidence="17">
    <location>
        <position position="129"/>
    </location>
</feature>
<feature type="modified residue" description="Phosphoserine" evidence="15 17">
    <location>
        <position position="231"/>
    </location>
</feature>
<feature type="modified residue" description="Phosphoserine" evidence="15 17">
    <location>
        <position position="245"/>
    </location>
</feature>
<feature type="modified residue" description="Phosphoserine" evidence="15 17">
    <location>
        <position position="247"/>
    </location>
</feature>
<feature type="modified residue" description="Phosphoserine" evidence="12 14 15 16 17">
    <location>
        <position position="299"/>
    </location>
</feature>
<feature type="splice variant" id="VSP_006707" description="In isoform Long." evidence="8">
    <original>E</original>
    <variation>EDGLVQLETVNLQVATYSKSKFCYLPHWMMQNLLLEE</variation>
    <location>
        <position position="106"/>
    </location>
</feature>
<feature type="splice variant" id="VSP_045044" description="In isoform 3." evidence="9">
    <location>
        <begin position="267"/>
        <end position="307"/>
    </location>
</feature>
<feature type="sequence variant" id="VAR_052436" description="In dbSNP:rs17744624." evidence="7">
    <original>P</original>
    <variation>A</variation>
    <location>
        <position position="130"/>
    </location>
</feature>
<feature type="sequence conflict" description="In Ref. 4; AK225877." evidence="10" ref="4">
    <original>C</original>
    <variation>R</variation>
    <location>
        <position position="25"/>
    </location>
</feature>
<feature type="sequence conflict" description="In Ref. 1; AAD08720." evidence="10" ref="1">
    <original>G</original>
    <variation>W</variation>
    <location>
        <position position="33"/>
    </location>
</feature>
<feature type="sequence conflict" description="In Ref. 1; AAD08720." evidence="10" ref="1">
    <original>I</original>
    <variation>H</variation>
    <location>
        <position position="183"/>
    </location>
</feature>
<feature type="strand" evidence="18">
    <location>
        <begin position="16"/>
        <end position="18"/>
    </location>
</feature>
<feature type="strand" evidence="18">
    <location>
        <begin position="20"/>
        <end position="26"/>
    </location>
</feature>
<feature type="strand" evidence="18">
    <location>
        <begin position="31"/>
        <end position="35"/>
    </location>
</feature>
<feature type="turn" evidence="18">
    <location>
        <begin position="39"/>
        <end position="44"/>
    </location>
</feature>
<feature type="strand" evidence="18">
    <location>
        <begin position="45"/>
        <end position="47"/>
    </location>
</feature>
<feature type="helix" evidence="18">
    <location>
        <begin position="50"/>
        <end position="58"/>
    </location>
</feature>
<feature type="strand" evidence="18">
    <location>
        <begin position="66"/>
        <end position="71"/>
    </location>
</feature>
<feature type="turn" evidence="18">
    <location>
        <begin position="72"/>
        <end position="75"/>
    </location>
</feature>
<feature type="strand" evidence="18">
    <location>
        <begin position="76"/>
        <end position="84"/>
    </location>
</feature>
<feature type="strand" evidence="18">
    <location>
        <begin position="91"/>
        <end position="93"/>
    </location>
</feature>
<feature type="helix" evidence="18">
    <location>
        <begin position="97"/>
        <end position="102"/>
    </location>
</feature>
<feature type="strand" evidence="18">
    <location>
        <begin position="108"/>
        <end position="115"/>
    </location>
</feature>
<feature type="strand" evidence="18">
    <location>
        <begin position="121"/>
        <end position="129"/>
    </location>
</feature>
<feature type="helix" evidence="18">
    <location>
        <begin position="130"/>
        <end position="134"/>
    </location>
</feature>
<feature type="helix" evidence="18">
    <location>
        <begin position="138"/>
        <end position="146"/>
    </location>
</feature>
<feature type="strand" evidence="18">
    <location>
        <begin position="157"/>
        <end position="164"/>
    </location>
</feature>
<feature type="strand" evidence="18">
    <location>
        <begin position="166"/>
        <end position="181"/>
    </location>
</feature>
<feature type="strand" evidence="18">
    <location>
        <begin position="188"/>
        <end position="191"/>
    </location>
</feature>
<feature type="strand" evidence="19">
    <location>
        <begin position="267"/>
        <end position="269"/>
    </location>
</feature>
<sequence>MFSFNMFDHPIPRVFQNRFSTQYRCFSVSMLAGPNDRSDVEKGGKIIMPPSALDQLSRLNITYPMLFKLTNKNSDRMTHCGVLEFVADEGICYLPHWMMQNLLLEEGGLVQVESVNLQVATYSKFQPQSPDFLDITNPKAVLENALRNFACLTTGDVIAINYNEKIYELRVMETKPDKAVSIIECDMNVDFDAPLGYKEPERQVQHEESTEGEADHSGYAGELGFRAFSGSGNRLDGKKKGVEPSPSPIKPGDIKRGIPNYEFKLGKITFIRNSRPLVKKVEEDEAGGRFVAFSGEGQSLRKKGRKP</sequence>
<name>UFD1_HUMAN</name>
<proteinExistence type="evidence at protein level"/>
<protein>
    <recommendedName>
        <fullName evidence="11">Ubiquitin recognition factor in ER-associated degradation protein 1</fullName>
    </recommendedName>
    <alternativeName>
        <fullName>Ubiquitin fusion degradation protein 1</fullName>
        <shortName>UB fusion protein 1</shortName>
    </alternativeName>
</protein>
<evidence type="ECO:0000250" key="1">
    <source>
        <dbReference type="UniProtKB" id="Q9ES53"/>
    </source>
</evidence>
<evidence type="ECO:0000256" key="2">
    <source>
        <dbReference type="SAM" id="MobiDB-lite"/>
    </source>
</evidence>
<evidence type="ECO:0000269" key="3">
    <source>
    </source>
</evidence>
<evidence type="ECO:0000269" key="4">
    <source>
    </source>
</evidence>
<evidence type="ECO:0000269" key="5">
    <source>
    </source>
</evidence>
<evidence type="ECO:0000269" key="6">
    <source>
    </source>
</evidence>
<evidence type="ECO:0000269" key="7">
    <source>
    </source>
</evidence>
<evidence type="ECO:0000303" key="8">
    <source>
    </source>
</evidence>
<evidence type="ECO:0000303" key="9">
    <source ref="4"/>
</evidence>
<evidence type="ECO:0000305" key="10"/>
<evidence type="ECO:0000312" key="11">
    <source>
        <dbReference type="HGNC" id="HGNC:12520"/>
    </source>
</evidence>
<evidence type="ECO:0007744" key="12">
    <source>
    </source>
</evidence>
<evidence type="ECO:0007744" key="13">
    <source>
    </source>
</evidence>
<evidence type="ECO:0007744" key="14">
    <source>
    </source>
</evidence>
<evidence type="ECO:0007744" key="15">
    <source>
    </source>
</evidence>
<evidence type="ECO:0007744" key="16">
    <source>
    </source>
</evidence>
<evidence type="ECO:0007744" key="17">
    <source>
    </source>
</evidence>
<evidence type="ECO:0007829" key="18">
    <source>
        <dbReference type="PDB" id="2YUJ"/>
    </source>
</evidence>
<evidence type="ECO:0007829" key="19">
    <source>
        <dbReference type="PDB" id="7WWQ"/>
    </source>
</evidence>
<gene>
    <name evidence="11" type="primary">UFD1</name>
    <name type="synonym">UFD1L</name>
</gene>
<comment type="function">
    <text evidence="1 6">Essential component of the ubiquitin-dependent proteolytic pathway which degrades ubiquitin fusion proteins. The ternary complex containing UFD1, VCP and NPLOC4 binds ubiquitinated proteins and is necessary for the export of misfolded proteins from the ER to the cytoplasm, where they are degraded by the proteasome. The NPLOC4-UFD1-VCP complex regulates spindle disassembly at the end of mitosis and is necessary for the formation of a closed nuclear envelope. It may be involved in the development of some ectoderm-derived structures (By similarity). Acts as a negative regulator of type I interferon production via the complex formed with VCP and NPLOC4, which binds to RIGI and recruits RNF125 to promote ubiquitination and degradation of RIGI (PubMed:26471729).</text>
</comment>
<comment type="pathway">
    <text evidence="1">Protein degradation; proteasomal ubiquitin-dependent pathway.</text>
</comment>
<comment type="subunit">
    <text evidence="3 4 5 6">Heterodimer with NPLOC4, this heterodimer binds VCP and inhibits Golgi membrane fusion (PubMed:11574150, PubMed:26471729). Interacts with USP13 (PubMed:21571647). Interacts with ZFAND2B; probably through VCP (PubMed:24160817).</text>
</comment>
<comment type="interaction">
    <interactant intactId="EBI-1994090">
        <id>Q92890</id>
    </interactant>
    <interactant intactId="EBI-466029">
        <id>P42858</id>
        <label>HTT</label>
    </interactant>
    <organismsDiffer>false</organismsDiffer>
    <experiments>7</experiments>
</comment>
<comment type="interaction">
    <interactant intactId="EBI-1994090">
        <id>Q92890</id>
    </interactant>
    <interactant intactId="EBI-1994109">
        <id>Q8TAT6</id>
        <label>NPLOC4</label>
    </interactant>
    <organismsDiffer>false</organismsDiffer>
    <experiments>10</experiments>
</comment>
<comment type="interaction">
    <interactant intactId="EBI-1994090">
        <id>Q92890</id>
    </interactant>
    <interactant intactId="EBI-355164">
        <id>P55072</id>
        <label>VCP</label>
    </interactant>
    <organismsDiffer>false</organismsDiffer>
    <experiments>8</experiments>
</comment>
<comment type="subcellular location">
    <subcellularLocation>
        <location evidence="1">Nucleus</location>
    </subcellularLocation>
    <subcellularLocation>
        <location evidence="1">Cytoplasm</location>
        <location evidence="1">Cytosol</location>
    </subcellularLocation>
</comment>
<comment type="alternative products">
    <event type="alternative splicing"/>
    <isoform>
        <id>Q92890-2</id>
        <name>Short</name>
        <sequence type="displayed"/>
    </isoform>
    <isoform>
        <id>Q92890-1</id>
        <name>Long</name>
        <sequence type="described" ref="VSP_006707"/>
    </isoform>
    <isoform>
        <id>Q92890-3</id>
        <name>3</name>
        <sequence type="described" ref="VSP_045044"/>
    </isoform>
</comment>
<comment type="tissue specificity">
    <text>Found in adult heart, skeletal muscle and pancreas, and in fetal liver and kidney.</text>
</comment>
<comment type="miscellaneous">
    <molecule>Isoform Short</molecule>
    <text>Major isoform.</text>
</comment>
<comment type="similarity">
    <text evidence="10">Belongs to the UFD1 family.</text>
</comment>
<keyword id="KW-0002">3D-structure</keyword>
<keyword id="KW-0007">Acetylation</keyword>
<keyword id="KW-0025">Alternative splicing</keyword>
<keyword id="KW-0963">Cytoplasm</keyword>
<keyword id="KW-0539">Nucleus</keyword>
<keyword id="KW-0597">Phosphoprotein</keyword>
<keyword id="KW-1267">Proteomics identification</keyword>
<keyword id="KW-1185">Reference proteome</keyword>
<keyword id="KW-0833">Ubl conjugation pathway</keyword>
<organism>
    <name type="scientific">Homo sapiens</name>
    <name type="common">Human</name>
    <dbReference type="NCBI Taxonomy" id="9606"/>
    <lineage>
        <taxon>Eukaryota</taxon>
        <taxon>Metazoa</taxon>
        <taxon>Chordata</taxon>
        <taxon>Craniata</taxon>
        <taxon>Vertebrata</taxon>
        <taxon>Euteleostomi</taxon>
        <taxon>Mammalia</taxon>
        <taxon>Eutheria</taxon>
        <taxon>Euarchontoglires</taxon>
        <taxon>Primates</taxon>
        <taxon>Haplorrhini</taxon>
        <taxon>Catarrhini</taxon>
        <taxon>Hominidae</taxon>
        <taxon>Homo</taxon>
    </lineage>
</organism>